<name>LPXD_NOSS1</name>
<gene>
    <name evidence="1" type="primary">lpxD</name>
    <name type="ordered locus">alr3074</name>
</gene>
<organism>
    <name type="scientific">Nostoc sp. (strain PCC 7120 / SAG 25.82 / UTEX 2576)</name>
    <dbReference type="NCBI Taxonomy" id="103690"/>
    <lineage>
        <taxon>Bacteria</taxon>
        <taxon>Bacillati</taxon>
        <taxon>Cyanobacteriota</taxon>
        <taxon>Cyanophyceae</taxon>
        <taxon>Nostocales</taxon>
        <taxon>Nostocaceae</taxon>
        <taxon>Nostoc</taxon>
    </lineage>
</organism>
<evidence type="ECO:0000255" key="1">
    <source>
        <dbReference type="HAMAP-Rule" id="MF_00523"/>
    </source>
</evidence>
<proteinExistence type="inferred from homology"/>
<reference key="1">
    <citation type="journal article" date="2001" name="DNA Res.">
        <title>Complete genomic sequence of the filamentous nitrogen-fixing cyanobacterium Anabaena sp. strain PCC 7120.</title>
        <authorList>
            <person name="Kaneko T."/>
            <person name="Nakamura Y."/>
            <person name="Wolk C.P."/>
            <person name="Kuritz T."/>
            <person name="Sasamoto S."/>
            <person name="Watanabe A."/>
            <person name="Iriguchi M."/>
            <person name="Ishikawa A."/>
            <person name="Kawashima K."/>
            <person name="Kimura T."/>
            <person name="Kishida Y."/>
            <person name="Kohara M."/>
            <person name="Matsumoto M."/>
            <person name="Matsuno A."/>
            <person name="Muraki A."/>
            <person name="Nakazaki N."/>
            <person name="Shimpo S."/>
            <person name="Sugimoto M."/>
            <person name="Takazawa M."/>
            <person name="Yamada M."/>
            <person name="Yasuda M."/>
            <person name="Tabata S."/>
        </authorList>
    </citation>
    <scope>NUCLEOTIDE SEQUENCE [LARGE SCALE GENOMIC DNA]</scope>
    <source>
        <strain>PCC 7120 / SAG 25.82 / UTEX 2576</strain>
    </source>
</reference>
<accession>Q8YSL0</accession>
<sequence>MKFSDIISKLEVTNHSLTQNPNNDPEITGMAAIDEATSANLSYIEGAKFASFIAQTNASALILPQNEAMQAQAQARGIVWMTTPEPRLLFAKAIALFYQPYTPTPEIHPTAVIHPTAKIGNDVYIGPHVVIQPGVEIGNGVIIHPNVVIYPYVKIGDRSILHANCTIEERSQIGADCIIHSGAVIGGEGFGFVPTRTGWYKMEQSGYVVLEDRVDIGCNTTIDRPSVGETRVGYDTKIDNLVQIAHGCQIGAGCAIAAQTGMAGGVKLGKRVILAGQVGIANQAKMGDGSTASAQTGILHDVKPGEVVSGTPAIPHKIYLKIGAIYSRLPEMYQAFRQLQRQSDKESKR</sequence>
<comment type="function">
    <text evidence="1">Catalyzes the N-acylation of UDP-3-O-acylglucosamine using 3-hydroxyacyl-ACP as the acyl donor. Is involved in the biosynthesis of lipid A, a phosphorylated glycolipid that anchors the lipopolysaccharide to the outer membrane of the cell.</text>
</comment>
<comment type="catalytic activity">
    <reaction evidence="1">
        <text>a UDP-3-O-[(3R)-3-hydroxyacyl]-alpha-D-glucosamine + a (3R)-hydroxyacyl-[ACP] = a UDP-2-N,3-O-bis[(3R)-3-hydroxyacyl]-alpha-D-glucosamine + holo-[ACP] + H(+)</text>
        <dbReference type="Rhea" id="RHEA:53836"/>
        <dbReference type="Rhea" id="RHEA-COMP:9685"/>
        <dbReference type="Rhea" id="RHEA-COMP:9945"/>
        <dbReference type="ChEBI" id="CHEBI:15378"/>
        <dbReference type="ChEBI" id="CHEBI:64479"/>
        <dbReference type="ChEBI" id="CHEBI:78827"/>
        <dbReference type="ChEBI" id="CHEBI:137740"/>
        <dbReference type="ChEBI" id="CHEBI:137748"/>
        <dbReference type="EC" id="2.3.1.191"/>
    </reaction>
</comment>
<comment type="pathway">
    <text evidence="1">Bacterial outer membrane biogenesis; LPS lipid A biosynthesis.</text>
</comment>
<comment type="subunit">
    <text evidence="1">Homotrimer.</text>
</comment>
<comment type="similarity">
    <text evidence="1">Belongs to the transferase hexapeptide repeat family. LpxD subfamily.</text>
</comment>
<keyword id="KW-0012">Acyltransferase</keyword>
<keyword id="KW-0441">Lipid A biosynthesis</keyword>
<keyword id="KW-0444">Lipid biosynthesis</keyword>
<keyword id="KW-0443">Lipid metabolism</keyword>
<keyword id="KW-1185">Reference proteome</keyword>
<keyword id="KW-0677">Repeat</keyword>
<keyword id="KW-0808">Transferase</keyword>
<dbReference type="EC" id="2.3.1.191" evidence="1"/>
<dbReference type="EMBL" id="BA000019">
    <property type="protein sequence ID" value="BAB74773.1"/>
    <property type="molecule type" value="Genomic_DNA"/>
</dbReference>
<dbReference type="PIR" id="AC2190">
    <property type="entry name" value="AC2190"/>
</dbReference>
<dbReference type="RefSeq" id="WP_010997225.1">
    <property type="nucleotide sequence ID" value="NZ_RSCN01000001.1"/>
</dbReference>
<dbReference type="SMR" id="Q8YSL0"/>
<dbReference type="STRING" id="103690.gene:10495110"/>
<dbReference type="KEGG" id="ana:alr3074"/>
<dbReference type="eggNOG" id="COG1044">
    <property type="taxonomic scope" value="Bacteria"/>
</dbReference>
<dbReference type="OrthoDB" id="9784739at2"/>
<dbReference type="UniPathway" id="UPA00973"/>
<dbReference type="Proteomes" id="UP000002483">
    <property type="component" value="Chromosome"/>
</dbReference>
<dbReference type="GO" id="GO:0031470">
    <property type="term" value="C:carboxysome"/>
    <property type="evidence" value="ECO:0007669"/>
    <property type="project" value="UniProtKB-ARBA"/>
</dbReference>
<dbReference type="GO" id="GO:0016020">
    <property type="term" value="C:membrane"/>
    <property type="evidence" value="ECO:0007669"/>
    <property type="project" value="GOC"/>
</dbReference>
<dbReference type="GO" id="GO:0016410">
    <property type="term" value="F:N-acyltransferase activity"/>
    <property type="evidence" value="ECO:0007669"/>
    <property type="project" value="InterPro"/>
</dbReference>
<dbReference type="GO" id="GO:0043886">
    <property type="term" value="F:structural constituent of carboxysome shell"/>
    <property type="evidence" value="ECO:0007669"/>
    <property type="project" value="UniProtKB-ARBA"/>
</dbReference>
<dbReference type="GO" id="GO:0009245">
    <property type="term" value="P:lipid A biosynthetic process"/>
    <property type="evidence" value="ECO:0007669"/>
    <property type="project" value="UniProtKB-UniRule"/>
</dbReference>
<dbReference type="CDD" id="cd03352">
    <property type="entry name" value="LbH_LpxD"/>
    <property type="match status" value="1"/>
</dbReference>
<dbReference type="Gene3D" id="2.160.10.10">
    <property type="entry name" value="Hexapeptide repeat proteins"/>
    <property type="match status" value="1"/>
</dbReference>
<dbReference type="Gene3D" id="3.40.1390.10">
    <property type="entry name" value="MurE/MurF, N-terminal domain"/>
    <property type="match status" value="1"/>
</dbReference>
<dbReference type="HAMAP" id="MF_00523">
    <property type="entry name" value="LpxD"/>
    <property type="match status" value="1"/>
</dbReference>
<dbReference type="InterPro" id="IPR001451">
    <property type="entry name" value="Hexapep"/>
</dbReference>
<dbReference type="InterPro" id="IPR007691">
    <property type="entry name" value="LpxD"/>
</dbReference>
<dbReference type="InterPro" id="IPR011004">
    <property type="entry name" value="Trimer_LpxA-like_sf"/>
</dbReference>
<dbReference type="InterPro" id="IPR020573">
    <property type="entry name" value="UDP_GlcNAc_AcTrfase_non-rep"/>
</dbReference>
<dbReference type="NCBIfam" id="TIGR01853">
    <property type="entry name" value="lipid_A_lpxD"/>
    <property type="match status" value="1"/>
</dbReference>
<dbReference type="NCBIfam" id="NF002060">
    <property type="entry name" value="PRK00892.1"/>
    <property type="match status" value="1"/>
</dbReference>
<dbReference type="PANTHER" id="PTHR43378">
    <property type="entry name" value="UDP-3-O-ACYLGLUCOSAMINE N-ACYLTRANSFERASE"/>
    <property type="match status" value="1"/>
</dbReference>
<dbReference type="PANTHER" id="PTHR43378:SF2">
    <property type="entry name" value="UDP-3-O-ACYLGLUCOSAMINE N-ACYLTRANSFERASE 1, MITOCHONDRIAL-RELATED"/>
    <property type="match status" value="1"/>
</dbReference>
<dbReference type="Pfam" id="PF00132">
    <property type="entry name" value="Hexapep"/>
    <property type="match status" value="2"/>
</dbReference>
<dbReference type="Pfam" id="PF04613">
    <property type="entry name" value="LpxD"/>
    <property type="match status" value="1"/>
</dbReference>
<dbReference type="SUPFAM" id="SSF51161">
    <property type="entry name" value="Trimeric LpxA-like enzymes"/>
    <property type="match status" value="1"/>
</dbReference>
<feature type="chain" id="PRO_0000059642" description="UDP-3-O-acylglucosamine N-acyltransferase">
    <location>
        <begin position="1"/>
        <end position="349"/>
    </location>
</feature>
<feature type="active site" description="Proton acceptor" evidence="1">
    <location>
        <position position="246"/>
    </location>
</feature>
<protein>
    <recommendedName>
        <fullName evidence="1">UDP-3-O-acylglucosamine N-acyltransferase</fullName>
        <ecNumber evidence="1">2.3.1.191</ecNumber>
    </recommendedName>
</protein>